<feature type="chain" id="PRO_1000136430" description="Replication restart protein DnaT">
    <location>
        <begin position="1"/>
        <end position="179"/>
    </location>
</feature>
<feature type="region of interest" description="Disordered" evidence="2">
    <location>
        <begin position="156"/>
        <end position="179"/>
    </location>
</feature>
<comment type="function">
    <text evidence="1">Involved in the restart of stalled replication forks, which reloads the replicative helicase on sites other than the origin of replication. Can function in multiple replication restart pathways. Displaces ssDNA from a PriB-ssDNA complex. Probably forms a spiral filament on ssDNA.</text>
</comment>
<comment type="subunit">
    <text evidence="1">Homooligomerizes. Interacts with PriB. Component of the replication restart primosome. Primosome assembly occurs via a 'hand-off' mechanism. PriA binds to replication forks, subsequently PriB then DnaT bind; DnaT then displaces ssDNA to generate the helicase loading substrate.</text>
</comment>
<comment type="similarity">
    <text evidence="1">Belongs to the DnaT family.</text>
</comment>
<sequence>MSSRVLTPDVVGIDALVHDHQTVLAKAEGGVVAVFANNAPAFYAVTPARLAELLALEEKLARPGSDVDLDDQLYQEPQAAPVAVPMGKFAMYPDWQPDADFIRLAALWGVALREPVTTEELASFIAYWQAEGKVFHHVQWQQKLARSLQIGRASNGGLPKRDVNTVSEPDSQIPPGFRG</sequence>
<protein>
    <recommendedName>
        <fullName evidence="1">Replication restart protein DnaT</fullName>
    </recommendedName>
</protein>
<organism>
    <name type="scientific">Escherichia coli O157:H7 (strain EC4115 / EHEC)</name>
    <dbReference type="NCBI Taxonomy" id="444450"/>
    <lineage>
        <taxon>Bacteria</taxon>
        <taxon>Pseudomonadati</taxon>
        <taxon>Pseudomonadota</taxon>
        <taxon>Gammaproteobacteria</taxon>
        <taxon>Enterobacterales</taxon>
        <taxon>Enterobacteriaceae</taxon>
        <taxon>Escherichia</taxon>
    </lineage>
</organism>
<dbReference type="EMBL" id="CP001164">
    <property type="protein sequence ID" value="ACI37551.1"/>
    <property type="molecule type" value="Genomic_DNA"/>
</dbReference>
<dbReference type="RefSeq" id="WP_000098821.1">
    <property type="nucleotide sequence ID" value="NC_011353.1"/>
</dbReference>
<dbReference type="SMR" id="B5Z4P5"/>
<dbReference type="KEGG" id="ecf:ECH74115_5875"/>
<dbReference type="HOGENOM" id="CLU_1501592_0_0_6"/>
<dbReference type="GO" id="GO:1990077">
    <property type="term" value="C:primosome complex"/>
    <property type="evidence" value="ECO:0007669"/>
    <property type="project" value="UniProtKB-KW"/>
</dbReference>
<dbReference type="GO" id="GO:0006269">
    <property type="term" value="P:DNA replication, synthesis of primer"/>
    <property type="evidence" value="ECO:0007669"/>
    <property type="project" value="UniProtKB-UniRule"/>
</dbReference>
<dbReference type="FunFam" id="1.10.8.1180:FF:000001">
    <property type="entry name" value="Primosomal protein 1"/>
    <property type="match status" value="1"/>
</dbReference>
<dbReference type="Gene3D" id="1.10.8.1180">
    <property type="match status" value="1"/>
</dbReference>
<dbReference type="HAMAP" id="MF_01061">
    <property type="entry name" value="DnaT"/>
    <property type="match status" value="1"/>
</dbReference>
<dbReference type="InterPro" id="IPR020917">
    <property type="entry name" value="DnaT"/>
</dbReference>
<dbReference type="InterPro" id="IPR040480">
    <property type="entry name" value="DnaT_DNA_bind"/>
</dbReference>
<dbReference type="NCBIfam" id="NF002770">
    <property type="entry name" value="PRK02854.1"/>
    <property type="match status" value="1"/>
</dbReference>
<dbReference type="Pfam" id="PF17948">
    <property type="entry name" value="DnaT"/>
    <property type="match status" value="1"/>
</dbReference>
<proteinExistence type="inferred from homology"/>
<reference key="1">
    <citation type="journal article" date="2011" name="Proc. Natl. Acad. Sci. U.S.A.">
        <title>Genomic anatomy of Escherichia coli O157:H7 outbreaks.</title>
        <authorList>
            <person name="Eppinger M."/>
            <person name="Mammel M.K."/>
            <person name="Leclerc J.E."/>
            <person name="Ravel J."/>
            <person name="Cebula T.A."/>
        </authorList>
    </citation>
    <scope>NUCLEOTIDE SEQUENCE [LARGE SCALE GENOMIC DNA]</scope>
    <source>
        <strain>EC4115 / EHEC</strain>
    </source>
</reference>
<name>DNAT_ECO5E</name>
<gene>
    <name evidence="1" type="primary">dnaT</name>
    <name type="ordered locus">ECH74115_5875</name>
</gene>
<evidence type="ECO:0000255" key="1">
    <source>
        <dbReference type="HAMAP-Rule" id="MF_01061"/>
    </source>
</evidence>
<evidence type="ECO:0000256" key="2">
    <source>
        <dbReference type="SAM" id="MobiDB-lite"/>
    </source>
</evidence>
<keyword id="KW-0235">DNA replication</keyword>
<keyword id="KW-0238">DNA-binding</keyword>
<keyword id="KW-0639">Primosome</keyword>
<accession>B5Z4P5</accession>